<accession>A6WH97</accession>
<proteinExistence type="inferred from homology"/>
<sequence length="81" mass="9096">MNDAFSTAQHRLDALGLRCPEPVMMVRKTVRQMAAGETLLIIADDPATTRDIPSFCEFMDHTLIASETTQTPYHYLIKKGL</sequence>
<reference key="1">
    <citation type="submission" date="2007-07" db="EMBL/GenBank/DDBJ databases">
        <title>Complete sequence of chromosome of Shewanella baltica OS185.</title>
        <authorList>
            <consortium name="US DOE Joint Genome Institute"/>
            <person name="Copeland A."/>
            <person name="Lucas S."/>
            <person name="Lapidus A."/>
            <person name="Barry K."/>
            <person name="Glavina del Rio T."/>
            <person name="Dalin E."/>
            <person name="Tice H."/>
            <person name="Pitluck S."/>
            <person name="Sims D."/>
            <person name="Brettin T."/>
            <person name="Bruce D."/>
            <person name="Detter J.C."/>
            <person name="Han C."/>
            <person name="Schmutz J."/>
            <person name="Larimer F."/>
            <person name="Land M."/>
            <person name="Hauser L."/>
            <person name="Kyrpides N."/>
            <person name="Mikhailova N."/>
            <person name="Brettar I."/>
            <person name="Rodrigues J."/>
            <person name="Konstantinidis K."/>
            <person name="Tiedje J."/>
            <person name="Richardson P."/>
        </authorList>
    </citation>
    <scope>NUCLEOTIDE SEQUENCE [LARGE SCALE GENOMIC DNA]</scope>
    <source>
        <strain>OS185</strain>
    </source>
</reference>
<evidence type="ECO:0000255" key="1">
    <source>
        <dbReference type="HAMAP-Rule" id="MF_00413"/>
    </source>
</evidence>
<protein>
    <recommendedName>
        <fullName evidence="1">Sulfur carrier protein TusA</fullName>
    </recommendedName>
</protein>
<feature type="chain" id="PRO_1000050023" description="Sulfur carrier protein TusA">
    <location>
        <begin position="1"/>
        <end position="81"/>
    </location>
</feature>
<feature type="active site" description="Cysteine persulfide intermediate" evidence="1">
    <location>
        <position position="19"/>
    </location>
</feature>
<dbReference type="EMBL" id="CP000753">
    <property type="protein sequence ID" value="ABS06186.1"/>
    <property type="molecule type" value="Genomic_DNA"/>
</dbReference>
<dbReference type="RefSeq" id="WP_011981993.1">
    <property type="nucleotide sequence ID" value="NC_009665.1"/>
</dbReference>
<dbReference type="SMR" id="A6WH97"/>
<dbReference type="KEGG" id="sbm:Shew185_0013"/>
<dbReference type="HOGENOM" id="CLU_165255_5_0_6"/>
<dbReference type="GO" id="GO:0005737">
    <property type="term" value="C:cytoplasm"/>
    <property type="evidence" value="ECO:0007669"/>
    <property type="project" value="UniProtKB-SubCell"/>
</dbReference>
<dbReference type="GO" id="GO:0097163">
    <property type="term" value="F:sulfur carrier activity"/>
    <property type="evidence" value="ECO:0007669"/>
    <property type="project" value="UniProtKB-UniRule"/>
</dbReference>
<dbReference type="GO" id="GO:0002143">
    <property type="term" value="P:tRNA wobble position uridine thiolation"/>
    <property type="evidence" value="ECO:0007669"/>
    <property type="project" value="InterPro"/>
</dbReference>
<dbReference type="CDD" id="cd03423">
    <property type="entry name" value="SirA"/>
    <property type="match status" value="1"/>
</dbReference>
<dbReference type="Gene3D" id="3.30.110.40">
    <property type="entry name" value="TusA-like domain"/>
    <property type="match status" value="1"/>
</dbReference>
<dbReference type="HAMAP" id="MF_00413">
    <property type="entry name" value="Thiourid_synth_A"/>
    <property type="match status" value="1"/>
</dbReference>
<dbReference type="InterPro" id="IPR022931">
    <property type="entry name" value="Sulphur_carrier_TusA"/>
</dbReference>
<dbReference type="InterPro" id="IPR001455">
    <property type="entry name" value="TusA-like"/>
</dbReference>
<dbReference type="InterPro" id="IPR036868">
    <property type="entry name" value="TusA-like_sf"/>
</dbReference>
<dbReference type="NCBIfam" id="NF001423">
    <property type="entry name" value="PRK00299.1"/>
    <property type="match status" value="1"/>
</dbReference>
<dbReference type="PANTHER" id="PTHR33279:SF2">
    <property type="entry name" value="SULFUR CARRIER PROTEIN TUSA"/>
    <property type="match status" value="1"/>
</dbReference>
<dbReference type="PANTHER" id="PTHR33279">
    <property type="entry name" value="SULFUR CARRIER PROTEIN YEDF-RELATED"/>
    <property type="match status" value="1"/>
</dbReference>
<dbReference type="Pfam" id="PF01206">
    <property type="entry name" value="TusA"/>
    <property type="match status" value="1"/>
</dbReference>
<dbReference type="SUPFAM" id="SSF64307">
    <property type="entry name" value="SirA-like"/>
    <property type="match status" value="1"/>
</dbReference>
<dbReference type="PROSITE" id="PS01148">
    <property type="entry name" value="UPF0033"/>
    <property type="match status" value="1"/>
</dbReference>
<gene>
    <name evidence="1" type="primary">tusA</name>
    <name type="ordered locus">Shew185_0013</name>
</gene>
<name>TUSA_SHEB8</name>
<organism>
    <name type="scientific">Shewanella baltica (strain OS185)</name>
    <dbReference type="NCBI Taxonomy" id="402882"/>
    <lineage>
        <taxon>Bacteria</taxon>
        <taxon>Pseudomonadati</taxon>
        <taxon>Pseudomonadota</taxon>
        <taxon>Gammaproteobacteria</taxon>
        <taxon>Alteromonadales</taxon>
        <taxon>Shewanellaceae</taxon>
        <taxon>Shewanella</taxon>
    </lineage>
</organism>
<keyword id="KW-0963">Cytoplasm</keyword>
<comment type="function">
    <text evidence="1">Sulfur carrier protein which probably makes part of a sulfur-relay system.</text>
</comment>
<comment type="subcellular location">
    <subcellularLocation>
        <location evidence="1">Cytoplasm</location>
    </subcellularLocation>
</comment>
<comment type="similarity">
    <text evidence="1">Belongs to the sulfur carrier protein TusA family.</text>
</comment>